<reference key="1">
    <citation type="journal article" date="1999" name="Infect. Immun.">
        <title>The 102-kilobase pgm locus of Yersinia pestis: sequence analysis and comparison of selected regions among different Yersinia pestis and Yersinia pseudotuberculosis strains.</title>
        <authorList>
            <person name="Buchrieser C."/>
            <person name="Rusniok C."/>
            <person name="Frangeul L."/>
            <person name="Couve E."/>
            <person name="Billault A."/>
            <person name="Kunst F."/>
            <person name="Carniel E."/>
            <person name="Glaser P."/>
        </authorList>
    </citation>
    <scope>NUCLEOTIDE SEQUENCE [GENOMIC DNA]</scope>
    <source>
        <strain>6/69</strain>
    </source>
</reference>
<reference key="2">
    <citation type="journal article" date="2001" name="Nature">
        <title>Genome sequence of Yersinia pestis, the causative agent of plague.</title>
        <authorList>
            <person name="Parkhill J."/>
            <person name="Wren B.W."/>
            <person name="Thomson N.R."/>
            <person name="Titball R.W."/>
            <person name="Holden M.T.G."/>
            <person name="Prentice M.B."/>
            <person name="Sebaihia M."/>
            <person name="James K.D."/>
            <person name="Churcher C.M."/>
            <person name="Mungall K.L."/>
            <person name="Baker S."/>
            <person name="Basham D."/>
            <person name="Bentley S.D."/>
            <person name="Brooks K."/>
            <person name="Cerdeno-Tarraga A.-M."/>
            <person name="Chillingworth T."/>
            <person name="Cronin A."/>
            <person name="Davies R.M."/>
            <person name="Davis P."/>
            <person name="Dougan G."/>
            <person name="Feltwell T."/>
            <person name="Hamlin N."/>
            <person name="Holroyd S."/>
            <person name="Jagels K."/>
            <person name="Karlyshev A.V."/>
            <person name="Leather S."/>
            <person name="Moule S."/>
            <person name="Oyston P.C.F."/>
            <person name="Quail M.A."/>
            <person name="Rutherford K.M."/>
            <person name="Simmonds M."/>
            <person name="Skelton J."/>
            <person name="Stevens K."/>
            <person name="Whitehead S."/>
            <person name="Barrell B.G."/>
        </authorList>
    </citation>
    <scope>NUCLEOTIDE SEQUENCE [LARGE SCALE GENOMIC DNA]</scope>
    <source>
        <strain>CO-92 / Biovar Orientalis</strain>
    </source>
</reference>
<reference key="3">
    <citation type="journal article" date="2002" name="J. Bacteriol.">
        <title>Genome sequence of Yersinia pestis KIM.</title>
        <authorList>
            <person name="Deng W."/>
            <person name="Burland V."/>
            <person name="Plunkett G. III"/>
            <person name="Boutin A."/>
            <person name="Mayhew G.F."/>
            <person name="Liss P."/>
            <person name="Perna N.T."/>
            <person name="Rose D.J."/>
            <person name="Mau B."/>
            <person name="Zhou S."/>
            <person name="Schwartz D.C."/>
            <person name="Fetherston J.D."/>
            <person name="Lindler L.E."/>
            <person name="Brubaker R.R."/>
            <person name="Plano G.V."/>
            <person name="Straley S.C."/>
            <person name="McDonough K.A."/>
            <person name="Nilles M.L."/>
            <person name="Matson J.S."/>
            <person name="Blattner F.R."/>
            <person name="Perry R.D."/>
        </authorList>
    </citation>
    <scope>NUCLEOTIDE SEQUENCE [LARGE SCALE GENOMIC DNA]</scope>
    <source>
        <strain>KIM10+ / Biovar Mediaevalis</strain>
    </source>
</reference>
<reference key="4">
    <citation type="journal article" date="2004" name="DNA Res.">
        <title>Complete genome sequence of Yersinia pestis strain 91001, an isolate avirulent to humans.</title>
        <authorList>
            <person name="Song Y."/>
            <person name="Tong Z."/>
            <person name="Wang J."/>
            <person name="Wang L."/>
            <person name="Guo Z."/>
            <person name="Han Y."/>
            <person name="Zhang J."/>
            <person name="Pei D."/>
            <person name="Zhou D."/>
            <person name="Qin H."/>
            <person name="Pang X."/>
            <person name="Han Y."/>
            <person name="Zhai J."/>
            <person name="Li M."/>
            <person name="Cui B."/>
            <person name="Qi Z."/>
            <person name="Jin L."/>
            <person name="Dai R."/>
            <person name="Chen F."/>
            <person name="Li S."/>
            <person name="Ye C."/>
            <person name="Du Z."/>
            <person name="Lin W."/>
            <person name="Wang J."/>
            <person name="Yu J."/>
            <person name="Yang H."/>
            <person name="Wang J."/>
            <person name="Huang P."/>
            <person name="Yang R."/>
        </authorList>
    </citation>
    <scope>NUCLEOTIDE SEQUENCE [LARGE SCALE GENOMIC DNA]</scope>
    <source>
        <strain>91001 / Biovar Mediaevalis</strain>
    </source>
</reference>
<name>ASTC_YERPE</name>
<keyword id="KW-0032">Aminotransferase</keyword>
<keyword id="KW-0056">Arginine metabolism</keyword>
<keyword id="KW-0663">Pyridoxal phosphate</keyword>
<keyword id="KW-1185">Reference proteome</keyword>
<keyword id="KW-0808">Transferase</keyword>
<dbReference type="EC" id="2.6.1.81" evidence="1"/>
<dbReference type="EMBL" id="AL031866">
    <property type="protein sequence ID" value="CAA21341.1"/>
    <property type="molecule type" value="Genomic_DNA"/>
</dbReference>
<dbReference type="EMBL" id="AL590842">
    <property type="protein sequence ID" value="CAL20600.1"/>
    <property type="molecule type" value="Genomic_DNA"/>
</dbReference>
<dbReference type="EMBL" id="AE009952">
    <property type="protein sequence ID" value="AAM85907.1"/>
    <property type="status" value="ALT_INIT"/>
    <property type="molecule type" value="Genomic_DNA"/>
</dbReference>
<dbReference type="EMBL" id="AE017042">
    <property type="protein sequence ID" value="AAS61936.1"/>
    <property type="status" value="ALT_INIT"/>
    <property type="molecule type" value="Genomic_DNA"/>
</dbReference>
<dbReference type="PIR" id="AE0239">
    <property type="entry name" value="AE0239"/>
</dbReference>
<dbReference type="PIR" id="T46998">
    <property type="entry name" value="T46998"/>
</dbReference>
<dbReference type="RefSeq" id="WP_002216140.1">
    <property type="nucleotide sequence ID" value="NZ_WUCM01000003.1"/>
</dbReference>
<dbReference type="RefSeq" id="YP_002346951.1">
    <property type="nucleotide sequence ID" value="NC_003143.1"/>
</dbReference>
<dbReference type="SMR" id="Q8D0D7"/>
<dbReference type="STRING" id="214092.YPO1962"/>
<dbReference type="PaxDb" id="214092-YPO1962"/>
<dbReference type="EnsemblBacteria" id="AAS61936">
    <property type="protein sequence ID" value="AAS61936"/>
    <property type="gene ID" value="YP_1707"/>
</dbReference>
<dbReference type="KEGG" id="ype:YPO1962"/>
<dbReference type="KEGG" id="ypk:y2349"/>
<dbReference type="KEGG" id="ypl:CH46_3152"/>
<dbReference type="KEGG" id="ypm:YP_1707"/>
<dbReference type="KEGG" id="ypv:BZ15_1579"/>
<dbReference type="KEGG" id="ypw:CH59_3760"/>
<dbReference type="PATRIC" id="fig|214092.21.peg.2339"/>
<dbReference type="eggNOG" id="COG4992">
    <property type="taxonomic scope" value="Bacteria"/>
</dbReference>
<dbReference type="HOGENOM" id="CLU_016922_10_1_6"/>
<dbReference type="OMA" id="RSAWDLC"/>
<dbReference type="OrthoDB" id="9801052at2"/>
<dbReference type="UniPathway" id="UPA00185">
    <property type="reaction ID" value="UER00281"/>
</dbReference>
<dbReference type="Proteomes" id="UP000000815">
    <property type="component" value="Chromosome"/>
</dbReference>
<dbReference type="Proteomes" id="UP000001019">
    <property type="component" value="Chromosome"/>
</dbReference>
<dbReference type="Proteomes" id="UP000002490">
    <property type="component" value="Chromosome"/>
</dbReference>
<dbReference type="GO" id="GO:0042802">
    <property type="term" value="F:identical protein binding"/>
    <property type="evidence" value="ECO:0000318"/>
    <property type="project" value="GO_Central"/>
</dbReference>
<dbReference type="GO" id="GO:0030170">
    <property type="term" value="F:pyridoxal phosphate binding"/>
    <property type="evidence" value="ECO:0000318"/>
    <property type="project" value="GO_Central"/>
</dbReference>
<dbReference type="GO" id="GO:0043825">
    <property type="term" value="F:succinylornithine transaminase activity"/>
    <property type="evidence" value="ECO:0007669"/>
    <property type="project" value="UniProtKB-EC"/>
</dbReference>
<dbReference type="GO" id="GO:1901607">
    <property type="term" value="P:alpha-amino acid biosynthetic process"/>
    <property type="evidence" value="ECO:0007669"/>
    <property type="project" value="UniProtKB-ARBA"/>
</dbReference>
<dbReference type="GO" id="GO:0006527">
    <property type="term" value="P:arginine catabolic process"/>
    <property type="evidence" value="ECO:0000318"/>
    <property type="project" value="GO_Central"/>
</dbReference>
<dbReference type="GO" id="GO:0019544">
    <property type="term" value="P:arginine catabolic process to glutamate"/>
    <property type="evidence" value="ECO:0007669"/>
    <property type="project" value="UniProtKB-UniRule"/>
</dbReference>
<dbReference type="GO" id="GO:0019545">
    <property type="term" value="P:arginine catabolic process to succinate"/>
    <property type="evidence" value="ECO:0007669"/>
    <property type="project" value="UniProtKB-UniRule"/>
</dbReference>
<dbReference type="GO" id="GO:0006593">
    <property type="term" value="P:ornithine catabolic process"/>
    <property type="evidence" value="ECO:0007669"/>
    <property type="project" value="InterPro"/>
</dbReference>
<dbReference type="CDD" id="cd00610">
    <property type="entry name" value="OAT_like"/>
    <property type="match status" value="1"/>
</dbReference>
<dbReference type="FunFam" id="3.40.640.10:FF:000004">
    <property type="entry name" value="Acetylornithine aminotransferase"/>
    <property type="match status" value="1"/>
</dbReference>
<dbReference type="Gene3D" id="3.90.1150.10">
    <property type="entry name" value="Aspartate Aminotransferase, domain 1"/>
    <property type="match status" value="1"/>
</dbReference>
<dbReference type="Gene3D" id="3.40.640.10">
    <property type="entry name" value="Type I PLP-dependent aspartate aminotransferase-like (Major domain)"/>
    <property type="match status" value="1"/>
</dbReference>
<dbReference type="HAMAP" id="MF_01107">
    <property type="entry name" value="ArgD_aminotrans_3"/>
    <property type="match status" value="1"/>
</dbReference>
<dbReference type="HAMAP" id="MF_01173">
    <property type="entry name" value="AstC_aminotrans_3"/>
    <property type="match status" value="1"/>
</dbReference>
<dbReference type="InterPro" id="IPR017652">
    <property type="entry name" value="Ac/SucOrn_transaminase_bac"/>
</dbReference>
<dbReference type="InterPro" id="IPR004636">
    <property type="entry name" value="AcOrn/SuccOrn_fam"/>
</dbReference>
<dbReference type="InterPro" id="IPR005814">
    <property type="entry name" value="Aminotrans_3"/>
</dbReference>
<dbReference type="InterPro" id="IPR049704">
    <property type="entry name" value="Aminotrans_3_PPA_site"/>
</dbReference>
<dbReference type="InterPro" id="IPR050103">
    <property type="entry name" value="Class-III_PLP-dep_AT"/>
</dbReference>
<dbReference type="InterPro" id="IPR015424">
    <property type="entry name" value="PyrdxlP-dep_Trfase"/>
</dbReference>
<dbReference type="InterPro" id="IPR015421">
    <property type="entry name" value="PyrdxlP-dep_Trfase_major"/>
</dbReference>
<dbReference type="InterPro" id="IPR015422">
    <property type="entry name" value="PyrdxlP-dep_Trfase_small"/>
</dbReference>
<dbReference type="InterPro" id="IPR026330">
    <property type="entry name" value="SOAT"/>
</dbReference>
<dbReference type="NCBIfam" id="TIGR03246">
    <property type="entry name" value="arg_catab_astC"/>
    <property type="match status" value="1"/>
</dbReference>
<dbReference type="NCBIfam" id="TIGR00707">
    <property type="entry name" value="argD"/>
    <property type="match status" value="1"/>
</dbReference>
<dbReference type="NCBIfam" id="NF002325">
    <property type="entry name" value="PRK01278.1"/>
    <property type="match status" value="1"/>
</dbReference>
<dbReference type="NCBIfam" id="NF003468">
    <property type="entry name" value="PRK05093.1"/>
    <property type="match status" value="1"/>
</dbReference>
<dbReference type="NCBIfam" id="NF009047">
    <property type="entry name" value="PRK12381.1"/>
    <property type="match status" value="1"/>
</dbReference>
<dbReference type="PANTHER" id="PTHR11986">
    <property type="entry name" value="AMINOTRANSFERASE CLASS III"/>
    <property type="match status" value="1"/>
</dbReference>
<dbReference type="PANTHER" id="PTHR11986:SF113">
    <property type="entry name" value="SUCCINYLORNITHINE TRANSAMINASE"/>
    <property type="match status" value="1"/>
</dbReference>
<dbReference type="Pfam" id="PF00202">
    <property type="entry name" value="Aminotran_3"/>
    <property type="match status" value="1"/>
</dbReference>
<dbReference type="PIRSF" id="PIRSF000521">
    <property type="entry name" value="Transaminase_4ab_Lys_Orn"/>
    <property type="match status" value="1"/>
</dbReference>
<dbReference type="SUPFAM" id="SSF53383">
    <property type="entry name" value="PLP-dependent transferases"/>
    <property type="match status" value="1"/>
</dbReference>
<dbReference type="PROSITE" id="PS00600">
    <property type="entry name" value="AA_TRANSFER_CLASS_3"/>
    <property type="match status" value="1"/>
</dbReference>
<accession>Q8D0D7</accession>
<accession>Q0WFI7</accession>
<accession>Q9ZC66</accession>
<organism>
    <name type="scientific">Yersinia pestis</name>
    <dbReference type="NCBI Taxonomy" id="632"/>
    <lineage>
        <taxon>Bacteria</taxon>
        <taxon>Pseudomonadati</taxon>
        <taxon>Pseudomonadota</taxon>
        <taxon>Gammaproteobacteria</taxon>
        <taxon>Enterobacterales</taxon>
        <taxon>Yersiniaceae</taxon>
        <taxon>Yersinia</taxon>
    </lineage>
</organism>
<evidence type="ECO:0000255" key="1">
    <source>
        <dbReference type="HAMAP-Rule" id="MF_01173"/>
    </source>
</evidence>
<evidence type="ECO:0000305" key="2"/>
<proteinExistence type="inferred from homology"/>
<gene>
    <name evidence="1" type="primary">astC</name>
    <name evidence="1" type="synonym">argM</name>
    <name type="synonym">cstC</name>
    <name type="ordered locus">YPO1962</name>
    <name type="ordered locus">y2349</name>
    <name type="ordered locus">YP_1707</name>
</gene>
<feature type="chain" id="PRO_0000120358" description="Succinylornithine transaminase">
    <location>
        <begin position="1"/>
        <end position="414"/>
    </location>
</feature>
<feature type="modified residue" description="N6-(pyridoxal phosphate)lysine" evidence="1">
    <location>
        <position position="260"/>
    </location>
</feature>
<sequence length="414" mass="44215">MEQPSPVTRQSFDEWIVPTYAPADFIVVRGEGSTLWDQQGKSYIDFAGGIAVNALGHGHPAVRAALIEQADKVWHLGNGYTNEPVLRLAKQLIDATFAEKVFFCNSGAEANEAALKLARKYALDNFANKAGQQGEKNQIVAFRNAFHGRTLFTVSAGGQPKYSQDFAPLPGGIHHGIFNDLASAEHLITDQTCAVIVEPIQGEGGVLPADKEFLHGLRALCDRHNALLIFDEIQTGVGRTGELYAYMHYGVSPDVLTSAKALGGGFPIGAMLTTTKYASALSVGSHGTTFGGNPLACAVAGTVLSLINQPTLLAGVKARHQWFIDELAEINARHNVFAEIRGRGLLIGCVLNAQYAGKSKEIVQAAAQYGLIALIAGPDVVRFAPSLIISPKEIKEGLARLAMGIEQVCQKVTS</sequence>
<protein>
    <recommendedName>
        <fullName evidence="1">Succinylornithine transaminase</fullName>
        <shortName>SOAT</shortName>
        <ecNumber evidence="1">2.6.1.81</ecNumber>
    </recommendedName>
    <alternativeName>
        <fullName evidence="1">Succinylornithine aminotransferase</fullName>
    </alternativeName>
</protein>
<comment type="function">
    <text evidence="1">Catalyzes the transamination of N(2)-succinylornithine and alpha-ketoglutarate into N(2)-succinylglutamate semialdehyde and glutamate. Can also act as an acetylornithine aminotransferase.</text>
</comment>
<comment type="catalytic activity">
    <reaction evidence="1">
        <text>N(2)-succinyl-L-ornithine + 2-oxoglutarate = N-succinyl-L-glutamate 5-semialdehyde + L-glutamate</text>
        <dbReference type="Rhea" id="RHEA:16953"/>
        <dbReference type="ChEBI" id="CHEBI:16810"/>
        <dbReference type="ChEBI" id="CHEBI:29985"/>
        <dbReference type="ChEBI" id="CHEBI:58514"/>
        <dbReference type="ChEBI" id="CHEBI:58520"/>
        <dbReference type="EC" id="2.6.1.81"/>
    </reaction>
</comment>
<comment type="cofactor">
    <cofactor evidence="1">
        <name>pyridoxal 5'-phosphate</name>
        <dbReference type="ChEBI" id="CHEBI:597326"/>
    </cofactor>
</comment>
<comment type="pathway">
    <text evidence="1">Amino-acid degradation; L-arginine degradation via AST pathway; L-glutamate and succinate from L-arginine: step 3/5.</text>
</comment>
<comment type="similarity">
    <text evidence="1">Belongs to the class-III pyridoxal-phosphate-dependent aminotransferase family. AstC subfamily.</text>
</comment>
<comment type="sequence caution" evidence="2">
    <conflict type="erroneous initiation">
        <sequence resource="EMBL-CDS" id="AAM85907"/>
    </conflict>
</comment>
<comment type="sequence caution" evidence="2">
    <conflict type="erroneous initiation">
        <sequence resource="EMBL-CDS" id="AAS61936"/>
    </conflict>
</comment>